<name>CYAY_NEIM0</name>
<accession>A9M0Q0</accession>
<reference key="1">
    <citation type="journal article" date="2008" name="Genomics">
        <title>Characterization of ST-4821 complex, a unique Neisseria meningitidis clone.</title>
        <authorList>
            <person name="Peng J."/>
            <person name="Yang L."/>
            <person name="Yang F."/>
            <person name="Yang J."/>
            <person name="Yan Y."/>
            <person name="Nie H."/>
            <person name="Zhang X."/>
            <person name="Xiong Z."/>
            <person name="Jiang Y."/>
            <person name="Cheng F."/>
            <person name="Xu X."/>
            <person name="Chen S."/>
            <person name="Sun L."/>
            <person name="Li W."/>
            <person name="Shen Y."/>
            <person name="Shao Z."/>
            <person name="Liang X."/>
            <person name="Xu J."/>
            <person name="Jin Q."/>
        </authorList>
    </citation>
    <scope>NUCLEOTIDE SEQUENCE [LARGE SCALE GENOMIC DNA]</scope>
    <source>
        <strain>053442</strain>
    </source>
</reference>
<feature type="chain" id="PRO_1000076546" description="Iron-sulfur cluster assembly protein CyaY">
    <location>
        <begin position="1"/>
        <end position="107"/>
    </location>
</feature>
<dbReference type="EMBL" id="CP000381">
    <property type="protein sequence ID" value="ABX72444.1"/>
    <property type="molecule type" value="Genomic_DNA"/>
</dbReference>
<dbReference type="RefSeq" id="WP_002226758.1">
    <property type="nucleotide sequence ID" value="NC_010120.1"/>
</dbReference>
<dbReference type="SMR" id="A9M0Q0"/>
<dbReference type="GeneID" id="66754428"/>
<dbReference type="KEGG" id="nmn:NMCC_0235"/>
<dbReference type="HOGENOM" id="CLU_080880_3_0_4"/>
<dbReference type="Proteomes" id="UP000001177">
    <property type="component" value="Chromosome"/>
</dbReference>
<dbReference type="GO" id="GO:0005737">
    <property type="term" value="C:cytoplasm"/>
    <property type="evidence" value="ECO:0007669"/>
    <property type="project" value="UniProtKB-ARBA"/>
</dbReference>
<dbReference type="GO" id="GO:0008199">
    <property type="term" value="F:ferric iron binding"/>
    <property type="evidence" value="ECO:0007669"/>
    <property type="project" value="InterPro"/>
</dbReference>
<dbReference type="GO" id="GO:0016226">
    <property type="term" value="P:iron-sulfur cluster assembly"/>
    <property type="evidence" value="ECO:0007669"/>
    <property type="project" value="UniProtKB-UniRule"/>
</dbReference>
<dbReference type="CDD" id="cd00503">
    <property type="entry name" value="Frataxin"/>
    <property type="match status" value="1"/>
</dbReference>
<dbReference type="Gene3D" id="3.30.920.10">
    <property type="entry name" value="Frataxin/CyaY"/>
    <property type="match status" value="1"/>
</dbReference>
<dbReference type="HAMAP" id="MF_00142">
    <property type="entry name" value="CyaY"/>
    <property type="match status" value="1"/>
</dbReference>
<dbReference type="InterPro" id="IPR047584">
    <property type="entry name" value="CyaY"/>
</dbReference>
<dbReference type="InterPro" id="IPR002908">
    <property type="entry name" value="Frataxin/CyaY"/>
</dbReference>
<dbReference type="InterPro" id="IPR036524">
    <property type="entry name" value="Frataxin/CyaY_sf"/>
</dbReference>
<dbReference type="InterPro" id="IPR020895">
    <property type="entry name" value="Frataxin_CS"/>
</dbReference>
<dbReference type="NCBIfam" id="TIGR03421">
    <property type="entry name" value="FeS_CyaY"/>
    <property type="match status" value="1"/>
</dbReference>
<dbReference type="PANTHER" id="PTHR16821">
    <property type="entry name" value="FRATAXIN"/>
    <property type="match status" value="1"/>
</dbReference>
<dbReference type="PANTHER" id="PTHR16821:SF2">
    <property type="entry name" value="FRATAXIN, MITOCHONDRIAL"/>
    <property type="match status" value="1"/>
</dbReference>
<dbReference type="Pfam" id="PF01491">
    <property type="entry name" value="Frataxin_Cyay"/>
    <property type="match status" value="1"/>
</dbReference>
<dbReference type="SMART" id="SM01219">
    <property type="entry name" value="Frataxin_Cyay"/>
    <property type="match status" value="1"/>
</dbReference>
<dbReference type="SUPFAM" id="SSF55387">
    <property type="entry name" value="Frataxin/Nqo15-like"/>
    <property type="match status" value="1"/>
</dbReference>
<dbReference type="PROSITE" id="PS01344">
    <property type="entry name" value="FRATAXIN_1"/>
    <property type="match status" value="1"/>
</dbReference>
<dbReference type="PROSITE" id="PS50810">
    <property type="entry name" value="FRATAXIN_2"/>
    <property type="match status" value="1"/>
</dbReference>
<organism>
    <name type="scientific">Neisseria meningitidis serogroup C (strain 053442)</name>
    <dbReference type="NCBI Taxonomy" id="374833"/>
    <lineage>
        <taxon>Bacteria</taxon>
        <taxon>Pseudomonadati</taxon>
        <taxon>Pseudomonadota</taxon>
        <taxon>Betaproteobacteria</taxon>
        <taxon>Neisseriales</taxon>
        <taxon>Neisseriaceae</taxon>
        <taxon>Neisseria</taxon>
    </lineage>
</organism>
<evidence type="ECO:0000255" key="1">
    <source>
        <dbReference type="HAMAP-Rule" id="MF_00142"/>
    </source>
</evidence>
<comment type="function">
    <text evidence="1">Involved in iron-sulfur (Fe-S) cluster assembly. May act as a regulator of Fe-S biogenesis.</text>
</comment>
<comment type="similarity">
    <text evidence="1">Belongs to the frataxin family.</text>
</comment>
<keyword id="KW-0408">Iron</keyword>
<keyword id="KW-0479">Metal-binding</keyword>
<gene>
    <name evidence="1" type="primary">cyaY</name>
    <name type="ordered locus">NMCC_0235</name>
</gene>
<proteinExistence type="inferred from homology"/>
<sequence length="107" mass="11996">MMTESEFIRASEALFEHIEDQIDENGWDFDCRFAGNVLTIEAGDGTQIIVNRHTPNQELWIAAKSGGYHFAEQNGKWLATRDSRDFYDVLNEALSAASGEAVEIAEL</sequence>
<protein>
    <recommendedName>
        <fullName evidence="1">Iron-sulfur cluster assembly protein CyaY</fullName>
    </recommendedName>
</protein>